<reference key="1">
    <citation type="journal article" date="2007" name="PLoS ONE">
        <title>Analysis of the neurotoxin complex genes in Clostridium botulinum A1-A4 and B1 strains: BoNT/A3, /Ba4 and /B1 clusters are located within plasmids.</title>
        <authorList>
            <person name="Smith T.J."/>
            <person name="Hill K.K."/>
            <person name="Foley B.T."/>
            <person name="Detter J.C."/>
            <person name="Munk A.C."/>
            <person name="Bruce D.C."/>
            <person name="Doggett N.A."/>
            <person name="Smith L.A."/>
            <person name="Marks J.D."/>
            <person name="Xie G."/>
            <person name="Brettin T.S."/>
        </authorList>
    </citation>
    <scope>NUCLEOTIDE SEQUENCE [LARGE SCALE GENOMIC DNA]</scope>
    <source>
        <strain>ATCC 19397 / Type A</strain>
    </source>
</reference>
<dbReference type="EC" id="6.1.1.22" evidence="1"/>
<dbReference type="EMBL" id="CP000726">
    <property type="protein sequence ID" value="ABS34382.1"/>
    <property type="molecule type" value="Genomic_DNA"/>
</dbReference>
<dbReference type="RefSeq" id="WP_011948326.1">
    <property type="nucleotide sequence ID" value="NC_009697.1"/>
</dbReference>
<dbReference type="SMR" id="A7FRK8"/>
<dbReference type="GeneID" id="5184852"/>
<dbReference type="KEGG" id="cba:CLB_0637"/>
<dbReference type="HOGENOM" id="CLU_004553_2_0_9"/>
<dbReference type="GO" id="GO:0005737">
    <property type="term" value="C:cytoplasm"/>
    <property type="evidence" value="ECO:0007669"/>
    <property type="project" value="UniProtKB-SubCell"/>
</dbReference>
<dbReference type="GO" id="GO:0004816">
    <property type="term" value="F:asparagine-tRNA ligase activity"/>
    <property type="evidence" value="ECO:0007669"/>
    <property type="project" value="UniProtKB-UniRule"/>
</dbReference>
<dbReference type="GO" id="GO:0005524">
    <property type="term" value="F:ATP binding"/>
    <property type="evidence" value="ECO:0007669"/>
    <property type="project" value="UniProtKB-UniRule"/>
</dbReference>
<dbReference type="GO" id="GO:0140096">
    <property type="term" value="F:catalytic activity, acting on a protein"/>
    <property type="evidence" value="ECO:0007669"/>
    <property type="project" value="UniProtKB-ARBA"/>
</dbReference>
<dbReference type="GO" id="GO:0003676">
    <property type="term" value="F:nucleic acid binding"/>
    <property type="evidence" value="ECO:0007669"/>
    <property type="project" value="InterPro"/>
</dbReference>
<dbReference type="GO" id="GO:0016740">
    <property type="term" value="F:transferase activity"/>
    <property type="evidence" value="ECO:0007669"/>
    <property type="project" value="UniProtKB-ARBA"/>
</dbReference>
<dbReference type="GO" id="GO:0006421">
    <property type="term" value="P:asparaginyl-tRNA aminoacylation"/>
    <property type="evidence" value="ECO:0007669"/>
    <property type="project" value="UniProtKB-UniRule"/>
</dbReference>
<dbReference type="CDD" id="cd00776">
    <property type="entry name" value="AsxRS_core"/>
    <property type="match status" value="1"/>
</dbReference>
<dbReference type="CDD" id="cd04318">
    <property type="entry name" value="EcAsnRS_like_N"/>
    <property type="match status" value="1"/>
</dbReference>
<dbReference type="FunFam" id="3.30.930.10:FF:000016">
    <property type="entry name" value="Asparagine--tRNA ligase"/>
    <property type="match status" value="1"/>
</dbReference>
<dbReference type="Gene3D" id="3.30.930.10">
    <property type="entry name" value="Bira Bifunctional Protein, Domain 2"/>
    <property type="match status" value="1"/>
</dbReference>
<dbReference type="Gene3D" id="2.40.50.140">
    <property type="entry name" value="Nucleic acid-binding proteins"/>
    <property type="match status" value="1"/>
</dbReference>
<dbReference type="HAMAP" id="MF_00534">
    <property type="entry name" value="Asn_tRNA_synth"/>
    <property type="match status" value="1"/>
</dbReference>
<dbReference type="InterPro" id="IPR004364">
    <property type="entry name" value="Aa-tRNA-synt_II"/>
</dbReference>
<dbReference type="InterPro" id="IPR006195">
    <property type="entry name" value="aa-tRNA-synth_II"/>
</dbReference>
<dbReference type="InterPro" id="IPR045864">
    <property type="entry name" value="aa-tRNA-synth_II/BPL/LPL"/>
</dbReference>
<dbReference type="InterPro" id="IPR004522">
    <property type="entry name" value="Asn-tRNA-ligase"/>
</dbReference>
<dbReference type="InterPro" id="IPR002312">
    <property type="entry name" value="Asp/Asn-tRNA-synth_IIb"/>
</dbReference>
<dbReference type="InterPro" id="IPR012340">
    <property type="entry name" value="NA-bd_OB-fold"/>
</dbReference>
<dbReference type="InterPro" id="IPR004365">
    <property type="entry name" value="NA-bd_OB_tRNA"/>
</dbReference>
<dbReference type="NCBIfam" id="TIGR00457">
    <property type="entry name" value="asnS"/>
    <property type="match status" value="1"/>
</dbReference>
<dbReference type="NCBIfam" id="NF003037">
    <property type="entry name" value="PRK03932.1"/>
    <property type="match status" value="1"/>
</dbReference>
<dbReference type="PANTHER" id="PTHR22594:SF34">
    <property type="entry name" value="ASPARAGINE--TRNA LIGASE, MITOCHONDRIAL-RELATED"/>
    <property type="match status" value="1"/>
</dbReference>
<dbReference type="PANTHER" id="PTHR22594">
    <property type="entry name" value="ASPARTYL/LYSYL-TRNA SYNTHETASE"/>
    <property type="match status" value="1"/>
</dbReference>
<dbReference type="Pfam" id="PF00152">
    <property type="entry name" value="tRNA-synt_2"/>
    <property type="match status" value="1"/>
</dbReference>
<dbReference type="Pfam" id="PF01336">
    <property type="entry name" value="tRNA_anti-codon"/>
    <property type="match status" value="1"/>
</dbReference>
<dbReference type="PRINTS" id="PR01042">
    <property type="entry name" value="TRNASYNTHASP"/>
</dbReference>
<dbReference type="SUPFAM" id="SSF55681">
    <property type="entry name" value="Class II aaRS and biotin synthetases"/>
    <property type="match status" value="1"/>
</dbReference>
<dbReference type="SUPFAM" id="SSF50249">
    <property type="entry name" value="Nucleic acid-binding proteins"/>
    <property type="match status" value="1"/>
</dbReference>
<dbReference type="PROSITE" id="PS50862">
    <property type="entry name" value="AA_TRNA_LIGASE_II"/>
    <property type="match status" value="1"/>
</dbReference>
<comment type="catalytic activity">
    <reaction evidence="1">
        <text>tRNA(Asn) + L-asparagine + ATP = L-asparaginyl-tRNA(Asn) + AMP + diphosphate + H(+)</text>
        <dbReference type="Rhea" id="RHEA:11180"/>
        <dbReference type="Rhea" id="RHEA-COMP:9659"/>
        <dbReference type="Rhea" id="RHEA-COMP:9674"/>
        <dbReference type="ChEBI" id="CHEBI:15378"/>
        <dbReference type="ChEBI" id="CHEBI:30616"/>
        <dbReference type="ChEBI" id="CHEBI:33019"/>
        <dbReference type="ChEBI" id="CHEBI:58048"/>
        <dbReference type="ChEBI" id="CHEBI:78442"/>
        <dbReference type="ChEBI" id="CHEBI:78515"/>
        <dbReference type="ChEBI" id="CHEBI:456215"/>
        <dbReference type="EC" id="6.1.1.22"/>
    </reaction>
</comment>
<comment type="subunit">
    <text evidence="1">Homodimer.</text>
</comment>
<comment type="subcellular location">
    <subcellularLocation>
        <location evidence="1">Cytoplasm</location>
    </subcellularLocation>
</comment>
<comment type="similarity">
    <text evidence="1">Belongs to the class-II aminoacyl-tRNA synthetase family.</text>
</comment>
<gene>
    <name evidence="1" type="primary">asnS</name>
    <name type="ordered locus">CLB_0637</name>
</gene>
<accession>A7FRK8</accession>
<sequence length="463" mass="53323">MDITLVKSLYRETEKHMDKEVKINGWVRTVRDSKNFAFVEVNDGSFFKNVQVILESSLENFKELCKMPISTSVEVEGIVQPTPNAKQPFEIKATRISIEGKSSTDYPLQKKRHTFEYLRTIAHLRPRSNAFSAVFRVRSLAAYAVHKFFQERGFVYTNTPIITGSDCEGAGEMFQLTTMDLNNIPKTEEGKIDFSKDFFGSPANLTVSGQLSAETFALAFRNVYTFGPTFRAENSNTARHASEFWMIEPEMAFAELTDYLDNAEDMVKFVINYVMENAPEEMAFFNSFVDKGLFDRLDNVVNSDFKRITYTEAVELLQKSGVKFDYEVEWGIDLQTEHERYLTEQIFKKPVFVTDYPKDIKAFYMRLNDDGKTVAAADLLVPGVGEIIGGSQREERLDVLEKRMEELNLNKEDYWWYLELRKYGETKHSGYGLGFERILMYITGMTNIRDVIPFPRTPGSAEF</sequence>
<organism>
    <name type="scientific">Clostridium botulinum (strain ATCC 19397 / Type A)</name>
    <dbReference type="NCBI Taxonomy" id="441770"/>
    <lineage>
        <taxon>Bacteria</taxon>
        <taxon>Bacillati</taxon>
        <taxon>Bacillota</taxon>
        <taxon>Clostridia</taxon>
        <taxon>Eubacteriales</taxon>
        <taxon>Clostridiaceae</taxon>
        <taxon>Clostridium</taxon>
    </lineage>
</organism>
<keyword id="KW-0030">Aminoacyl-tRNA synthetase</keyword>
<keyword id="KW-0067">ATP-binding</keyword>
<keyword id="KW-0963">Cytoplasm</keyword>
<keyword id="KW-0436">Ligase</keyword>
<keyword id="KW-0547">Nucleotide-binding</keyword>
<keyword id="KW-0648">Protein biosynthesis</keyword>
<feature type="chain" id="PRO_1000051383" description="Asparagine--tRNA ligase">
    <location>
        <begin position="1"/>
        <end position="463"/>
    </location>
</feature>
<evidence type="ECO:0000255" key="1">
    <source>
        <dbReference type="HAMAP-Rule" id="MF_00534"/>
    </source>
</evidence>
<proteinExistence type="inferred from homology"/>
<protein>
    <recommendedName>
        <fullName evidence="1">Asparagine--tRNA ligase</fullName>
        <ecNumber evidence="1">6.1.1.22</ecNumber>
    </recommendedName>
    <alternativeName>
        <fullName evidence="1">Asparaginyl-tRNA synthetase</fullName>
        <shortName evidence="1">AsnRS</shortName>
    </alternativeName>
</protein>
<name>SYN_CLOB1</name>